<reference key="1">
    <citation type="submission" date="2006-05" db="EMBL/GenBank/DDBJ databases">
        <title>Complete sequence of chromosome 1 of Burkholderia cenocepacia AU 1054.</title>
        <authorList>
            <consortium name="US DOE Joint Genome Institute"/>
            <person name="Copeland A."/>
            <person name="Lucas S."/>
            <person name="Lapidus A."/>
            <person name="Barry K."/>
            <person name="Detter J.C."/>
            <person name="Glavina del Rio T."/>
            <person name="Hammon N."/>
            <person name="Israni S."/>
            <person name="Dalin E."/>
            <person name="Tice H."/>
            <person name="Pitluck S."/>
            <person name="Chain P."/>
            <person name="Malfatti S."/>
            <person name="Shin M."/>
            <person name="Vergez L."/>
            <person name="Schmutz J."/>
            <person name="Larimer F."/>
            <person name="Land M."/>
            <person name="Hauser L."/>
            <person name="Kyrpides N."/>
            <person name="Lykidis A."/>
            <person name="LiPuma J.J."/>
            <person name="Konstantinidis K."/>
            <person name="Tiedje J.M."/>
            <person name="Richardson P."/>
        </authorList>
    </citation>
    <scope>NUCLEOTIDE SEQUENCE [LARGE SCALE GENOMIC DNA]</scope>
    <source>
        <strain>AU 1054</strain>
    </source>
</reference>
<keyword id="KW-0963">Cytoplasm</keyword>
<keyword id="KW-0227">DNA damage</keyword>
<keyword id="KW-0228">DNA excision</keyword>
<keyword id="KW-0234">DNA repair</keyword>
<keyword id="KW-0267">Excision nuclease</keyword>
<keyword id="KW-0742">SOS response</keyword>
<proteinExistence type="inferred from homology"/>
<gene>
    <name evidence="1" type="primary">uvrC</name>
    <name type="ordered locus">Bcen_0663</name>
</gene>
<organism>
    <name type="scientific">Burkholderia orbicola (strain AU 1054)</name>
    <dbReference type="NCBI Taxonomy" id="331271"/>
    <lineage>
        <taxon>Bacteria</taxon>
        <taxon>Pseudomonadati</taxon>
        <taxon>Pseudomonadota</taxon>
        <taxon>Betaproteobacteria</taxon>
        <taxon>Burkholderiales</taxon>
        <taxon>Burkholderiaceae</taxon>
        <taxon>Burkholderia</taxon>
        <taxon>Burkholderia cepacia complex</taxon>
        <taxon>Burkholderia orbicola</taxon>
    </lineage>
</organism>
<sequence>MTSPEASATPFEPKKILAQLPHMPGVYRYYDTTGAVLYVGKARDLKKRVSSYFTKTQLSPRIAMMVTRIARIETTVTRSEAEALLLENNLIKALAPRYNILFRDDKSYPYLKLTAHRFPRMAYYRGSVDKQNQYFGPFPSAWAVRESIQILQRVFQLRTCEDSVFNNRTRPCLLHQIGRCTAPCVGAISEEDYAVDVSNAARFLLGRQSEVMKELEQKMHAFAAELKFEQAAAVRNQMSSLATVLHQQAIEVGSDSDVDILAVVAQGGRVCVNLAMVRGGRHLGDKAYFPTHVESALTLAEGGLGEEVEPAEAVDATADAPVDTVPDQPAEEAGSARGAAAASVEAEVLDAFIAQHYLGNRVPPVLVVSHAPASRDLLELLSEQAGHKVSLVRQPQGQRRAWLSMAEQNARLALARLLSEQGSQQARTRALADTLSYDSDDLATLRIECFDISHTMGEATQASCVVYHHHKMQSSEYRRYNITGITPGDDYAAMRQVLTRRYEKMVEQAAQAAAVDEAAGIDGESTRQAEASSLLPNIVLIDGGKGQVEIARQVFTELGLDTSMLVGVAKGEGRKVGLETLVFADGRAPLELGKESAALMLVAQIRDEAHRFAITGMRAKRAKARQTSRLEELEGVGAKRRQRLLARFGGLRGVVAASVEELASVEGISHALAEQIYKQLH</sequence>
<name>UVRC_BURO1</name>
<accession>Q1BXT2</accession>
<evidence type="ECO:0000255" key="1">
    <source>
        <dbReference type="HAMAP-Rule" id="MF_00203"/>
    </source>
</evidence>
<feature type="chain" id="PRO_0000264876" description="UvrABC system protein C">
    <location>
        <begin position="1"/>
        <end position="681"/>
    </location>
</feature>
<feature type="domain" description="GIY-YIG" evidence="1">
    <location>
        <begin position="22"/>
        <end position="100"/>
    </location>
</feature>
<feature type="domain" description="UVR" evidence="1">
    <location>
        <begin position="209"/>
        <end position="244"/>
    </location>
</feature>
<dbReference type="EMBL" id="CP000378">
    <property type="protein sequence ID" value="ABF75573.1"/>
    <property type="molecule type" value="Genomic_DNA"/>
</dbReference>
<dbReference type="SMR" id="Q1BXT2"/>
<dbReference type="HOGENOM" id="CLU_014841_3_0_4"/>
<dbReference type="GO" id="GO:0005737">
    <property type="term" value="C:cytoplasm"/>
    <property type="evidence" value="ECO:0007669"/>
    <property type="project" value="UniProtKB-SubCell"/>
</dbReference>
<dbReference type="GO" id="GO:0009380">
    <property type="term" value="C:excinuclease repair complex"/>
    <property type="evidence" value="ECO:0007669"/>
    <property type="project" value="InterPro"/>
</dbReference>
<dbReference type="GO" id="GO:0003677">
    <property type="term" value="F:DNA binding"/>
    <property type="evidence" value="ECO:0007669"/>
    <property type="project" value="UniProtKB-UniRule"/>
</dbReference>
<dbReference type="GO" id="GO:0009381">
    <property type="term" value="F:excinuclease ABC activity"/>
    <property type="evidence" value="ECO:0007669"/>
    <property type="project" value="UniProtKB-UniRule"/>
</dbReference>
<dbReference type="GO" id="GO:0006289">
    <property type="term" value="P:nucleotide-excision repair"/>
    <property type="evidence" value="ECO:0007669"/>
    <property type="project" value="UniProtKB-UniRule"/>
</dbReference>
<dbReference type="GO" id="GO:0009432">
    <property type="term" value="P:SOS response"/>
    <property type="evidence" value="ECO:0007669"/>
    <property type="project" value="UniProtKB-UniRule"/>
</dbReference>
<dbReference type="CDD" id="cd10434">
    <property type="entry name" value="GIY-YIG_UvrC_Cho"/>
    <property type="match status" value="1"/>
</dbReference>
<dbReference type="FunFam" id="3.30.420.340:FF:000001">
    <property type="entry name" value="UvrABC system protein C"/>
    <property type="match status" value="1"/>
</dbReference>
<dbReference type="FunFam" id="3.40.1440.10:FF:000001">
    <property type="entry name" value="UvrABC system protein C"/>
    <property type="match status" value="1"/>
</dbReference>
<dbReference type="Gene3D" id="1.10.150.20">
    <property type="entry name" value="5' to 3' exonuclease, C-terminal subdomain"/>
    <property type="match status" value="1"/>
</dbReference>
<dbReference type="Gene3D" id="3.40.1440.10">
    <property type="entry name" value="GIY-YIG endonuclease"/>
    <property type="match status" value="1"/>
</dbReference>
<dbReference type="Gene3D" id="4.10.860.10">
    <property type="entry name" value="UVR domain"/>
    <property type="match status" value="1"/>
</dbReference>
<dbReference type="Gene3D" id="3.30.420.340">
    <property type="entry name" value="UvrC, RNAse H endonuclease domain"/>
    <property type="match status" value="1"/>
</dbReference>
<dbReference type="HAMAP" id="MF_00203">
    <property type="entry name" value="UvrC"/>
    <property type="match status" value="1"/>
</dbReference>
<dbReference type="InterPro" id="IPR000305">
    <property type="entry name" value="GIY-YIG_endonuc"/>
</dbReference>
<dbReference type="InterPro" id="IPR035901">
    <property type="entry name" value="GIY-YIG_endonuc_sf"/>
</dbReference>
<dbReference type="InterPro" id="IPR047296">
    <property type="entry name" value="GIY-YIG_UvrC_Cho"/>
</dbReference>
<dbReference type="InterPro" id="IPR003583">
    <property type="entry name" value="Hlx-hairpin-Hlx_DNA-bd_motif"/>
</dbReference>
<dbReference type="InterPro" id="IPR010994">
    <property type="entry name" value="RuvA_2-like"/>
</dbReference>
<dbReference type="InterPro" id="IPR001943">
    <property type="entry name" value="UVR_dom"/>
</dbReference>
<dbReference type="InterPro" id="IPR036876">
    <property type="entry name" value="UVR_dom_sf"/>
</dbReference>
<dbReference type="InterPro" id="IPR050066">
    <property type="entry name" value="UvrABC_protein_C"/>
</dbReference>
<dbReference type="InterPro" id="IPR004791">
    <property type="entry name" value="UvrC"/>
</dbReference>
<dbReference type="InterPro" id="IPR001162">
    <property type="entry name" value="UvrC_RNase_H_dom"/>
</dbReference>
<dbReference type="InterPro" id="IPR038476">
    <property type="entry name" value="UvrC_RNase_H_dom_sf"/>
</dbReference>
<dbReference type="NCBIfam" id="NF001824">
    <property type="entry name" value="PRK00558.1-5"/>
    <property type="match status" value="1"/>
</dbReference>
<dbReference type="NCBIfam" id="TIGR00194">
    <property type="entry name" value="uvrC"/>
    <property type="match status" value="1"/>
</dbReference>
<dbReference type="PANTHER" id="PTHR30562:SF1">
    <property type="entry name" value="UVRABC SYSTEM PROTEIN C"/>
    <property type="match status" value="1"/>
</dbReference>
<dbReference type="PANTHER" id="PTHR30562">
    <property type="entry name" value="UVRC/OXIDOREDUCTASE"/>
    <property type="match status" value="1"/>
</dbReference>
<dbReference type="Pfam" id="PF01541">
    <property type="entry name" value="GIY-YIG"/>
    <property type="match status" value="1"/>
</dbReference>
<dbReference type="Pfam" id="PF14520">
    <property type="entry name" value="HHH_5"/>
    <property type="match status" value="1"/>
</dbReference>
<dbReference type="Pfam" id="PF02151">
    <property type="entry name" value="UVR"/>
    <property type="match status" value="1"/>
</dbReference>
<dbReference type="Pfam" id="PF22920">
    <property type="entry name" value="UvrC_RNaseH"/>
    <property type="match status" value="2"/>
</dbReference>
<dbReference type="Pfam" id="PF08459">
    <property type="entry name" value="UvrC_RNaseH_dom"/>
    <property type="match status" value="1"/>
</dbReference>
<dbReference type="SMART" id="SM00465">
    <property type="entry name" value="GIYc"/>
    <property type="match status" value="1"/>
</dbReference>
<dbReference type="SMART" id="SM00278">
    <property type="entry name" value="HhH1"/>
    <property type="match status" value="2"/>
</dbReference>
<dbReference type="SUPFAM" id="SSF46600">
    <property type="entry name" value="C-terminal UvrC-binding domain of UvrB"/>
    <property type="match status" value="1"/>
</dbReference>
<dbReference type="SUPFAM" id="SSF82771">
    <property type="entry name" value="GIY-YIG endonuclease"/>
    <property type="match status" value="1"/>
</dbReference>
<dbReference type="SUPFAM" id="SSF47781">
    <property type="entry name" value="RuvA domain 2-like"/>
    <property type="match status" value="1"/>
</dbReference>
<dbReference type="PROSITE" id="PS50164">
    <property type="entry name" value="GIY_YIG"/>
    <property type="match status" value="1"/>
</dbReference>
<dbReference type="PROSITE" id="PS50151">
    <property type="entry name" value="UVR"/>
    <property type="match status" value="1"/>
</dbReference>
<dbReference type="PROSITE" id="PS50165">
    <property type="entry name" value="UVRC"/>
    <property type="match status" value="1"/>
</dbReference>
<protein>
    <recommendedName>
        <fullName evidence="1">UvrABC system protein C</fullName>
        <shortName evidence="1">Protein UvrC</shortName>
    </recommendedName>
    <alternativeName>
        <fullName evidence="1">Excinuclease ABC subunit C</fullName>
    </alternativeName>
</protein>
<comment type="function">
    <text evidence="1">The UvrABC repair system catalyzes the recognition and processing of DNA lesions. UvrC both incises the 5' and 3' sides of the lesion. The N-terminal half is responsible for the 3' incision and the C-terminal half is responsible for the 5' incision.</text>
</comment>
<comment type="subunit">
    <text evidence="1">Interacts with UvrB in an incision complex.</text>
</comment>
<comment type="subcellular location">
    <subcellularLocation>
        <location evidence="1">Cytoplasm</location>
    </subcellularLocation>
</comment>
<comment type="similarity">
    <text evidence="1">Belongs to the UvrC family.</text>
</comment>